<gene>
    <name evidence="1" type="primary">cobS</name>
    <name type="ordered locus">VV1475</name>
</gene>
<dbReference type="EC" id="2.7.8.26" evidence="1"/>
<dbReference type="EMBL" id="BA000037">
    <property type="protein sequence ID" value="BAC94239.1"/>
    <property type="molecule type" value="Genomic_DNA"/>
</dbReference>
<dbReference type="RefSeq" id="WP_011080623.1">
    <property type="nucleotide sequence ID" value="NC_005139.1"/>
</dbReference>
<dbReference type="STRING" id="672.VV93_v1c13850"/>
<dbReference type="KEGG" id="vvy:VV1475"/>
<dbReference type="eggNOG" id="COG0368">
    <property type="taxonomic scope" value="Bacteria"/>
</dbReference>
<dbReference type="HOGENOM" id="CLU_057426_1_1_6"/>
<dbReference type="UniPathway" id="UPA00148">
    <property type="reaction ID" value="UER00238"/>
</dbReference>
<dbReference type="Proteomes" id="UP000002675">
    <property type="component" value="Chromosome I"/>
</dbReference>
<dbReference type="GO" id="GO:0005886">
    <property type="term" value="C:plasma membrane"/>
    <property type="evidence" value="ECO:0007669"/>
    <property type="project" value="UniProtKB-SubCell"/>
</dbReference>
<dbReference type="GO" id="GO:0051073">
    <property type="term" value="F:adenosylcobinamide-GDP ribazoletransferase activity"/>
    <property type="evidence" value="ECO:0007669"/>
    <property type="project" value="UniProtKB-UniRule"/>
</dbReference>
<dbReference type="GO" id="GO:0008818">
    <property type="term" value="F:cobalamin 5'-phosphate synthase activity"/>
    <property type="evidence" value="ECO:0007669"/>
    <property type="project" value="UniProtKB-UniRule"/>
</dbReference>
<dbReference type="GO" id="GO:0009236">
    <property type="term" value="P:cobalamin biosynthetic process"/>
    <property type="evidence" value="ECO:0007669"/>
    <property type="project" value="UniProtKB-UniRule"/>
</dbReference>
<dbReference type="HAMAP" id="MF_00719">
    <property type="entry name" value="CobS"/>
    <property type="match status" value="1"/>
</dbReference>
<dbReference type="InterPro" id="IPR003805">
    <property type="entry name" value="CobS"/>
</dbReference>
<dbReference type="NCBIfam" id="NF001277">
    <property type="entry name" value="PRK00235.1-3"/>
    <property type="match status" value="1"/>
</dbReference>
<dbReference type="PANTHER" id="PTHR34148">
    <property type="entry name" value="ADENOSYLCOBINAMIDE-GDP RIBAZOLETRANSFERASE"/>
    <property type="match status" value="1"/>
</dbReference>
<dbReference type="PANTHER" id="PTHR34148:SF1">
    <property type="entry name" value="ADENOSYLCOBINAMIDE-GDP RIBAZOLETRANSFERASE"/>
    <property type="match status" value="1"/>
</dbReference>
<dbReference type="Pfam" id="PF02654">
    <property type="entry name" value="CobS"/>
    <property type="match status" value="1"/>
</dbReference>
<sequence length="255" mass="27797">MKTWQYQYQLFCLAVSFFSRLPVPKSTPYSDERMNQAGRYFALVGTLLGLLCVLVYAFASLFFPYQVAIVLMMAFSLLLTGAFHEDGLTDMADGIGGGMTLDKRLTIMKDSRIGTYGSATLTMALIGKFVFLTTLARQPDFGLMIVVAYTLSRAVAATLIYDMPYVSDSDTSKSKPLANAQSSTELAILILTGVLAAISLGLGVGLLLILFAILFRWAFKRWLLARLGGFTGDCLGGAQQLMELGIYLVLIAVVQ</sequence>
<protein>
    <recommendedName>
        <fullName evidence="1">Adenosylcobinamide-GDP ribazoletransferase</fullName>
        <ecNumber evidence="1">2.7.8.26</ecNumber>
    </recommendedName>
    <alternativeName>
        <fullName evidence="1">Cobalamin synthase</fullName>
    </alternativeName>
    <alternativeName>
        <fullName evidence="1">Cobalamin-5'-phosphate synthase</fullName>
    </alternativeName>
</protein>
<comment type="function">
    <text evidence="1">Joins adenosylcobinamide-GDP and alpha-ribazole to generate adenosylcobalamin (Ado-cobalamin). Also synthesizes adenosylcobalamin 5'-phosphate from adenosylcobinamide-GDP and alpha-ribazole 5'-phosphate.</text>
</comment>
<comment type="catalytic activity">
    <reaction evidence="1">
        <text>alpha-ribazole + adenosylcob(III)inamide-GDP = adenosylcob(III)alamin + GMP + H(+)</text>
        <dbReference type="Rhea" id="RHEA:16049"/>
        <dbReference type="ChEBI" id="CHEBI:10329"/>
        <dbReference type="ChEBI" id="CHEBI:15378"/>
        <dbReference type="ChEBI" id="CHEBI:18408"/>
        <dbReference type="ChEBI" id="CHEBI:58115"/>
        <dbReference type="ChEBI" id="CHEBI:60487"/>
        <dbReference type="EC" id="2.7.8.26"/>
    </reaction>
</comment>
<comment type="catalytic activity">
    <reaction evidence="1">
        <text>alpha-ribazole 5'-phosphate + adenosylcob(III)inamide-GDP = adenosylcob(III)alamin 5'-phosphate + GMP + H(+)</text>
        <dbReference type="Rhea" id="RHEA:23560"/>
        <dbReference type="ChEBI" id="CHEBI:15378"/>
        <dbReference type="ChEBI" id="CHEBI:57918"/>
        <dbReference type="ChEBI" id="CHEBI:58115"/>
        <dbReference type="ChEBI" id="CHEBI:60487"/>
        <dbReference type="ChEBI" id="CHEBI:60493"/>
        <dbReference type="EC" id="2.7.8.26"/>
    </reaction>
</comment>
<comment type="cofactor">
    <cofactor evidence="1">
        <name>Mg(2+)</name>
        <dbReference type="ChEBI" id="CHEBI:18420"/>
    </cofactor>
</comment>
<comment type="pathway">
    <text evidence="1">Cofactor biosynthesis; adenosylcobalamin biosynthesis; adenosylcobalamin from cob(II)yrinate a,c-diamide: step 7/7.</text>
</comment>
<comment type="subcellular location">
    <subcellularLocation>
        <location evidence="1">Cell inner membrane</location>
        <topology evidence="1">Multi-pass membrane protein</topology>
    </subcellularLocation>
</comment>
<comment type="similarity">
    <text evidence="1">Belongs to the CobS family.</text>
</comment>
<proteinExistence type="inferred from homology"/>
<name>COBS_VIBVY</name>
<organism>
    <name type="scientific">Vibrio vulnificus (strain YJ016)</name>
    <dbReference type="NCBI Taxonomy" id="196600"/>
    <lineage>
        <taxon>Bacteria</taxon>
        <taxon>Pseudomonadati</taxon>
        <taxon>Pseudomonadota</taxon>
        <taxon>Gammaproteobacteria</taxon>
        <taxon>Vibrionales</taxon>
        <taxon>Vibrionaceae</taxon>
        <taxon>Vibrio</taxon>
    </lineage>
</organism>
<feature type="chain" id="PRO_0000146905" description="Adenosylcobinamide-GDP ribazoletransferase">
    <location>
        <begin position="1"/>
        <end position="255"/>
    </location>
</feature>
<feature type="transmembrane region" description="Helical" evidence="1">
    <location>
        <begin position="43"/>
        <end position="63"/>
    </location>
</feature>
<feature type="transmembrane region" description="Helical" evidence="1">
    <location>
        <begin position="64"/>
        <end position="84"/>
    </location>
</feature>
<feature type="transmembrane region" description="Helical" evidence="1">
    <location>
        <begin position="113"/>
        <end position="133"/>
    </location>
</feature>
<feature type="transmembrane region" description="Helical" evidence="1">
    <location>
        <begin position="141"/>
        <end position="161"/>
    </location>
</feature>
<feature type="transmembrane region" description="Helical" evidence="1">
    <location>
        <begin position="195"/>
        <end position="215"/>
    </location>
</feature>
<feature type="transmembrane region" description="Helical" evidence="1">
    <location>
        <begin position="234"/>
        <end position="254"/>
    </location>
</feature>
<accession>Q7MLF2</accession>
<evidence type="ECO:0000255" key="1">
    <source>
        <dbReference type="HAMAP-Rule" id="MF_00719"/>
    </source>
</evidence>
<reference key="1">
    <citation type="journal article" date="2003" name="Genome Res.">
        <title>Comparative genome analysis of Vibrio vulnificus, a marine pathogen.</title>
        <authorList>
            <person name="Chen C.-Y."/>
            <person name="Wu K.-M."/>
            <person name="Chang Y.-C."/>
            <person name="Chang C.-H."/>
            <person name="Tsai H.-C."/>
            <person name="Liao T.-L."/>
            <person name="Liu Y.-M."/>
            <person name="Chen H.-J."/>
            <person name="Shen A.B.-T."/>
            <person name="Li J.-C."/>
            <person name="Su T.-L."/>
            <person name="Shao C.-P."/>
            <person name="Lee C.-T."/>
            <person name="Hor L.-I."/>
            <person name="Tsai S.-F."/>
        </authorList>
    </citation>
    <scope>NUCLEOTIDE SEQUENCE [LARGE SCALE GENOMIC DNA]</scope>
    <source>
        <strain>YJ016</strain>
    </source>
</reference>
<keyword id="KW-0997">Cell inner membrane</keyword>
<keyword id="KW-1003">Cell membrane</keyword>
<keyword id="KW-0169">Cobalamin biosynthesis</keyword>
<keyword id="KW-0460">Magnesium</keyword>
<keyword id="KW-0472">Membrane</keyword>
<keyword id="KW-0808">Transferase</keyword>
<keyword id="KW-0812">Transmembrane</keyword>
<keyword id="KW-1133">Transmembrane helix</keyword>